<comment type="function">
    <text evidence="6">May be involved in transcriptional regulation.</text>
</comment>
<comment type="subcellular location">
    <subcellularLocation>
        <location evidence="6">Nucleus</location>
    </subcellularLocation>
</comment>
<comment type="similarity">
    <text evidence="1">Belongs to the krueppel C2H2-type zinc-finger protein family.</text>
</comment>
<accession>P85977</accession>
<sequence length="480" mass="55649">MTTFKEAMTFKDVAVVFTEEELGLLDLAQRKLYRDVMLENFRNLLSVGHQAFHRDTFHFLREEKIWMMKTAIQREGNSGDKIQTEMETVSEAGTHQEWSFQQIWEKIASDLTRSQDLVINSSQFSKEGDFPCQTEAGLSVIHTRQKSSQGNGYKPSFSDVSHFDFHQQLHSGEKSHTCDECGKNFCYISALRIHQRVHMGEKCYKCDVCGKEFSQSSHLQTHQRVHTGEKPFKCVECGKGFSRRSALNVHHKLHTGEKPYNCEECGKAFIHDSQLQEHQRIHTGEKPFKCDICGKSFCGRSRLNRHSMVHTAEKPFRCDTCDKSFRQRSALNSHRMIHTGEKPYKCEECGKGFICRRDLYTHHMVHTGEKPYNCKECGKSFRWASCLLKHQRVHSGEKPFQCEECGKGFYTNSQCYSHQRSHSGEKPYKCVECGKGYKRRLDLDFHQRVHTGEKLYNCKECGKSFSRAPCLLKHERLHSG</sequence>
<organism>
    <name type="scientific">Chlorocebus aethiops</name>
    <name type="common">Green monkey</name>
    <name type="synonym">Cercopithecus aethiops</name>
    <dbReference type="NCBI Taxonomy" id="9534"/>
    <lineage>
        <taxon>Eukaryota</taxon>
        <taxon>Metazoa</taxon>
        <taxon>Chordata</taxon>
        <taxon>Craniata</taxon>
        <taxon>Vertebrata</taxon>
        <taxon>Euteleostomi</taxon>
        <taxon>Mammalia</taxon>
        <taxon>Eutheria</taxon>
        <taxon>Euarchontoglires</taxon>
        <taxon>Primates</taxon>
        <taxon>Haplorrhini</taxon>
        <taxon>Catarrhini</taxon>
        <taxon>Cercopithecidae</taxon>
        <taxon>Cercopithecinae</taxon>
        <taxon>Chlorocebus</taxon>
    </lineage>
</organism>
<proteinExistence type="evidence at protein level"/>
<keyword id="KW-0903">Direct protein sequencing</keyword>
<keyword id="KW-0238">DNA-binding</keyword>
<keyword id="KW-0479">Metal-binding</keyword>
<keyword id="KW-0539">Nucleus</keyword>
<keyword id="KW-0677">Repeat</keyword>
<keyword id="KW-0804">Transcription</keyword>
<keyword id="KW-0805">Transcription regulation</keyword>
<keyword id="KW-0862">Zinc</keyword>
<keyword id="KW-0863">Zinc-finger</keyword>
<feature type="chain" id="PRO_0000392477" description="Zinc finger protein">
    <location>
        <begin position="1"/>
        <end position="480" status="greater than"/>
    </location>
</feature>
<feature type="domain" description="KRAB" evidence="3">
    <location>
        <begin position="8"/>
        <end position="78"/>
    </location>
</feature>
<feature type="zinc finger region" description="C2H2-type 1" evidence="2">
    <location>
        <begin position="176"/>
        <end position="198"/>
    </location>
</feature>
<feature type="zinc finger region" description="C2H2-type 2" evidence="2">
    <location>
        <begin position="204"/>
        <end position="226"/>
    </location>
</feature>
<feature type="zinc finger region" description="C2H2-type 3" evidence="2">
    <location>
        <begin position="232"/>
        <end position="254"/>
    </location>
</feature>
<feature type="zinc finger region" description="C2H2-type 4" evidence="2">
    <location>
        <begin position="260"/>
        <end position="282"/>
    </location>
</feature>
<feature type="zinc finger region" description="C2H2-type 5" evidence="2">
    <location>
        <begin position="288"/>
        <end position="310"/>
    </location>
</feature>
<feature type="zinc finger region" description="C2H2-type 6" evidence="2">
    <location>
        <begin position="316"/>
        <end position="338"/>
    </location>
</feature>
<feature type="zinc finger region" description="C2H2-type 7" evidence="2">
    <location>
        <begin position="344"/>
        <end position="366"/>
    </location>
</feature>
<feature type="zinc finger region" description="C2H2-type 8" evidence="2">
    <location>
        <begin position="372"/>
        <end position="394"/>
    </location>
</feature>
<feature type="zinc finger region" description="C2H2-type 9" evidence="2">
    <location>
        <begin position="400"/>
        <end position="422"/>
    </location>
</feature>
<feature type="zinc finger region" description="C2H2-type 10" evidence="2">
    <location>
        <begin position="428"/>
        <end position="450"/>
    </location>
</feature>
<feature type="zinc finger region" description="C2H2-type 11" evidence="2">
    <location>
        <begin position="456"/>
        <end position="478"/>
    </location>
</feature>
<feature type="non-terminal residue">
    <location>
        <position position="480"/>
    </location>
</feature>
<evidence type="ECO:0000255" key="1"/>
<evidence type="ECO:0000255" key="2">
    <source>
        <dbReference type="PROSITE-ProRule" id="PRU00042"/>
    </source>
</evidence>
<evidence type="ECO:0000255" key="3">
    <source>
        <dbReference type="PROSITE-ProRule" id="PRU00119"/>
    </source>
</evidence>
<evidence type="ECO:0000269" key="4">
    <source ref="1"/>
</evidence>
<evidence type="ECO:0000303" key="5">
    <source ref="1"/>
</evidence>
<evidence type="ECO:0000305" key="6"/>
<name>ZNFP_CHLAE</name>
<reference evidence="6" key="1">
    <citation type="submission" date="2008-07" db="UniProtKB">
        <title>Molecular biology of Dengue and its interaction with host cell proteins.</title>
        <authorList>
            <person name="Zargar S."/>
            <person name="Jain S.K."/>
        </authorList>
    </citation>
    <scope>PROTEIN SEQUENCE</scope>
    <source>
        <tissue evidence="4">Kidney</tissue>
    </source>
</reference>
<protein>
    <recommendedName>
        <fullName evidence="5">Zinc finger protein</fullName>
    </recommendedName>
</protein>
<dbReference type="SMR" id="P85977"/>
<dbReference type="GO" id="GO:0005634">
    <property type="term" value="C:nucleus"/>
    <property type="evidence" value="ECO:0007669"/>
    <property type="project" value="UniProtKB-SubCell"/>
</dbReference>
<dbReference type="GO" id="GO:0000981">
    <property type="term" value="F:DNA-binding transcription factor activity, RNA polymerase II-specific"/>
    <property type="evidence" value="ECO:0007669"/>
    <property type="project" value="TreeGrafter"/>
</dbReference>
<dbReference type="GO" id="GO:0000978">
    <property type="term" value="F:RNA polymerase II cis-regulatory region sequence-specific DNA binding"/>
    <property type="evidence" value="ECO:0007669"/>
    <property type="project" value="TreeGrafter"/>
</dbReference>
<dbReference type="GO" id="GO:0008270">
    <property type="term" value="F:zinc ion binding"/>
    <property type="evidence" value="ECO:0007669"/>
    <property type="project" value="UniProtKB-KW"/>
</dbReference>
<dbReference type="GO" id="GO:0045944">
    <property type="term" value="P:positive regulation of transcription by RNA polymerase II"/>
    <property type="evidence" value="ECO:0007669"/>
    <property type="project" value="UniProtKB-ARBA"/>
</dbReference>
<dbReference type="CDD" id="cd07765">
    <property type="entry name" value="KRAB_A-box"/>
    <property type="match status" value="1"/>
</dbReference>
<dbReference type="FunFam" id="3.30.160.60:FF:000709">
    <property type="entry name" value="GDNF-inducible zinc finger protein 1"/>
    <property type="match status" value="1"/>
</dbReference>
<dbReference type="FunFam" id="3.30.160.60:FF:001313">
    <property type="entry name" value="Zinc finger protein 155"/>
    <property type="match status" value="1"/>
</dbReference>
<dbReference type="FunFam" id="3.30.160.60:FF:001634">
    <property type="entry name" value="Zinc finger protein 224, isoform CRA_a"/>
    <property type="match status" value="2"/>
</dbReference>
<dbReference type="FunFam" id="3.30.160.60:FF:002239">
    <property type="entry name" value="Zinc finger protein 226"/>
    <property type="match status" value="1"/>
</dbReference>
<dbReference type="FunFam" id="3.30.160.60:FF:002153">
    <property type="entry name" value="Zinc finger protein 30"/>
    <property type="match status" value="1"/>
</dbReference>
<dbReference type="FunFam" id="3.30.160.60:FF:002343">
    <property type="entry name" value="Zinc finger protein 33A"/>
    <property type="match status" value="1"/>
</dbReference>
<dbReference type="FunFam" id="3.30.160.60:FF:001286">
    <property type="entry name" value="Zinc finger protein 485"/>
    <property type="match status" value="1"/>
</dbReference>
<dbReference type="FunFam" id="3.30.160.60:FF:002254">
    <property type="entry name" value="Zinc finger protein 540"/>
    <property type="match status" value="1"/>
</dbReference>
<dbReference type="FunFam" id="3.30.160.60:FF:001343">
    <property type="entry name" value="Zinc finger protein 568"/>
    <property type="match status" value="1"/>
</dbReference>
<dbReference type="FunFam" id="3.30.160.60:FF:000102">
    <property type="entry name" value="zinc finger protein 850 isoform X1"/>
    <property type="match status" value="1"/>
</dbReference>
<dbReference type="Gene3D" id="6.10.140.140">
    <property type="match status" value="1"/>
</dbReference>
<dbReference type="Gene3D" id="3.30.160.60">
    <property type="entry name" value="Classic Zinc Finger"/>
    <property type="match status" value="11"/>
</dbReference>
<dbReference type="InterPro" id="IPR050329">
    <property type="entry name" value="GLI_C2H2-zinc-finger"/>
</dbReference>
<dbReference type="InterPro" id="IPR001909">
    <property type="entry name" value="KRAB"/>
</dbReference>
<dbReference type="InterPro" id="IPR036051">
    <property type="entry name" value="KRAB_dom_sf"/>
</dbReference>
<dbReference type="InterPro" id="IPR036236">
    <property type="entry name" value="Znf_C2H2_sf"/>
</dbReference>
<dbReference type="InterPro" id="IPR013087">
    <property type="entry name" value="Znf_C2H2_type"/>
</dbReference>
<dbReference type="PANTHER" id="PTHR19818:SF158">
    <property type="entry name" value="C2H2-TYPE DOMAIN-CONTAINING PROTEIN-RELATED"/>
    <property type="match status" value="1"/>
</dbReference>
<dbReference type="PANTHER" id="PTHR19818">
    <property type="entry name" value="ZINC FINGER PROTEIN ZIC AND GLI"/>
    <property type="match status" value="1"/>
</dbReference>
<dbReference type="Pfam" id="PF01352">
    <property type="entry name" value="KRAB"/>
    <property type="match status" value="1"/>
</dbReference>
<dbReference type="Pfam" id="PF00096">
    <property type="entry name" value="zf-C2H2"/>
    <property type="match status" value="9"/>
</dbReference>
<dbReference type="SMART" id="SM00349">
    <property type="entry name" value="KRAB"/>
    <property type="match status" value="1"/>
</dbReference>
<dbReference type="SMART" id="SM00355">
    <property type="entry name" value="ZnF_C2H2"/>
    <property type="match status" value="11"/>
</dbReference>
<dbReference type="SUPFAM" id="SSF57667">
    <property type="entry name" value="beta-beta-alpha zinc fingers"/>
    <property type="match status" value="6"/>
</dbReference>
<dbReference type="SUPFAM" id="SSF109640">
    <property type="entry name" value="KRAB domain (Kruppel-associated box)"/>
    <property type="match status" value="1"/>
</dbReference>
<dbReference type="PROSITE" id="PS50805">
    <property type="entry name" value="KRAB"/>
    <property type="match status" value="1"/>
</dbReference>
<dbReference type="PROSITE" id="PS00028">
    <property type="entry name" value="ZINC_FINGER_C2H2_1"/>
    <property type="match status" value="11"/>
</dbReference>
<dbReference type="PROSITE" id="PS50157">
    <property type="entry name" value="ZINC_FINGER_C2H2_2"/>
    <property type="match status" value="11"/>
</dbReference>